<organism>
    <name type="scientific">Mycobacterium bovis (strain BCG / Tokyo 172 / ATCC 35737 / TMC 1019)</name>
    <dbReference type="NCBI Taxonomy" id="561275"/>
    <lineage>
        <taxon>Bacteria</taxon>
        <taxon>Bacillati</taxon>
        <taxon>Actinomycetota</taxon>
        <taxon>Actinomycetes</taxon>
        <taxon>Mycobacteriales</taxon>
        <taxon>Mycobacteriaceae</taxon>
        <taxon>Mycobacterium</taxon>
        <taxon>Mycobacterium tuberculosis complex</taxon>
    </lineage>
</organism>
<name>FBIA_MYCBT</name>
<proteinExistence type="inferred from homology"/>
<sequence length="331" mass="35335">MKVTVLAGGVGGARFLLGVQQLLGLGQFAANSAHSDADHQLSAVVNVGDDAWIHGLRVCPDLDTCMYTLGGGVDPQRGWGQRDETWHAMQELVRYGVQPDWFELGDRDLATHLVRTQMLQAGYPLSQITEALCDRWQPGARLLPATDDRCETHVVITDPVDESRKAIHFQEWWVRYRAQVPTHSFAFVGAEKSSAATEAIAALADADIIMLAPSNPVVSIGAILAVPGIRAALREATAPIVGYSPIIGEKPLRGMADTCLSVIGVDSTAAAVGRHYGARCATGILDCWLVHDGDHAEIDGVTVRSVPLLMTDPNATAEMVRAGCDLAGVVA</sequence>
<comment type="function">
    <text evidence="1">Catalyzes the transfer of the phosphoenolpyruvate moiety from enoylpyruvoyl-2-diphospho-5'-guanosine (EPPG) to 7,8-didemethyl-8-hydroxy-5-deazariboflavin (FO) with the formation of dehydro coenzyme F420-0 and GMP.</text>
</comment>
<comment type="catalytic activity">
    <reaction evidence="1">
        <text>enolpyruvoyl-2-diphospho-5'-guanosine + 7,8-didemethyl-8-hydroxy-5-deazariboflavin = dehydro coenzyme F420-0 + GMP + H(+)</text>
        <dbReference type="Rhea" id="RHEA:27510"/>
        <dbReference type="ChEBI" id="CHEBI:15378"/>
        <dbReference type="ChEBI" id="CHEBI:58115"/>
        <dbReference type="ChEBI" id="CHEBI:59904"/>
        <dbReference type="ChEBI" id="CHEBI:143701"/>
        <dbReference type="ChEBI" id="CHEBI:143705"/>
        <dbReference type="EC" id="2.7.8.28"/>
    </reaction>
</comment>
<comment type="cofactor">
    <cofactor evidence="1">
        <name>Mg(2+)</name>
        <dbReference type="ChEBI" id="CHEBI:18420"/>
    </cofactor>
</comment>
<comment type="pathway">
    <text evidence="1">Cofactor biosynthesis; coenzyme F420 biosynthesis.</text>
</comment>
<comment type="subunit">
    <text evidence="1">Homodimer.</text>
</comment>
<comment type="similarity">
    <text evidence="1">Belongs to the CofD family.</text>
</comment>
<keyword id="KW-0460">Magnesium</keyword>
<keyword id="KW-0808">Transferase</keyword>
<reference key="1">
    <citation type="journal article" date="2009" name="Vaccine">
        <title>Whole genome sequence analysis of Mycobacterium bovis bacillus Calmette-Guerin (BCG) Tokyo 172: a comparative study of BCG vaccine substrains.</title>
        <authorList>
            <person name="Seki M."/>
            <person name="Honda I."/>
            <person name="Fujita I."/>
            <person name="Yano I."/>
            <person name="Yamamoto S."/>
            <person name="Koyama A."/>
        </authorList>
    </citation>
    <scope>NUCLEOTIDE SEQUENCE [LARGE SCALE GENOMIC DNA]</scope>
    <source>
        <strain>BCG / Tokyo 172 / ATCC 35737 / TMC 1019</strain>
    </source>
</reference>
<evidence type="ECO:0000255" key="1">
    <source>
        <dbReference type="HAMAP-Rule" id="MF_01257"/>
    </source>
</evidence>
<protein>
    <recommendedName>
        <fullName evidence="1">Phosphoenolpyruvate transferase</fullName>
        <ecNumber evidence="1">2.7.8.28</ecNumber>
    </recommendedName>
    <alternativeName>
        <fullName evidence="1">EPPG:FO PEP transferase</fullName>
    </alternativeName>
</protein>
<gene>
    <name evidence="1" type="primary">fbiA</name>
    <name type="ordered locus">JTY_3286</name>
</gene>
<accession>C1AH35</accession>
<dbReference type="EC" id="2.7.8.28" evidence="1"/>
<dbReference type="EMBL" id="AP010918">
    <property type="protein sequence ID" value="BAH27564.1"/>
    <property type="molecule type" value="Genomic_DNA"/>
</dbReference>
<dbReference type="SMR" id="C1AH35"/>
<dbReference type="KEGG" id="mbt:JTY_3286"/>
<dbReference type="HOGENOM" id="CLU_055795_0_0_11"/>
<dbReference type="UniPathway" id="UPA00071"/>
<dbReference type="GO" id="GO:0043743">
    <property type="term" value="F:LPPG:FO 2-phospho-L-lactate transferase activity"/>
    <property type="evidence" value="ECO:0007669"/>
    <property type="project" value="UniProtKB-EC"/>
</dbReference>
<dbReference type="GO" id="GO:0000287">
    <property type="term" value="F:magnesium ion binding"/>
    <property type="evidence" value="ECO:0007669"/>
    <property type="project" value="InterPro"/>
</dbReference>
<dbReference type="GO" id="GO:0052645">
    <property type="term" value="P:F420-0 metabolic process"/>
    <property type="evidence" value="ECO:0007669"/>
    <property type="project" value="UniProtKB-UniRule"/>
</dbReference>
<dbReference type="CDD" id="cd07186">
    <property type="entry name" value="CofD_like"/>
    <property type="match status" value="1"/>
</dbReference>
<dbReference type="FunFam" id="1.10.8.240:FF:000001">
    <property type="entry name" value="2-phospho-L-lactate transferase"/>
    <property type="match status" value="1"/>
</dbReference>
<dbReference type="FunFam" id="3.40.50.10680:FF:000001">
    <property type="entry name" value="2-phospho-L-lactate transferase"/>
    <property type="match status" value="1"/>
</dbReference>
<dbReference type="Gene3D" id="1.10.8.240">
    <property type="entry name" value="CofD-like domain"/>
    <property type="match status" value="1"/>
</dbReference>
<dbReference type="Gene3D" id="3.40.50.10680">
    <property type="entry name" value="CofD-like domains"/>
    <property type="match status" value="1"/>
</dbReference>
<dbReference type="HAMAP" id="MF_01257">
    <property type="entry name" value="CofD"/>
    <property type="match status" value="1"/>
</dbReference>
<dbReference type="InterPro" id="IPR002882">
    <property type="entry name" value="CofD"/>
</dbReference>
<dbReference type="InterPro" id="IPR038136">
    <property type="entry name" value="CofD-like_dom_sf"/>
</dbReference>
<dbReference type="InterPro" id="IPR010115">
    <property type="entry name" value="FbiA/CofD"/>
</dbReference>
<dbReference type="NCBIfam" id="TIGR01819">
    <property type="entry name" value="F420_cofD"/>
    <property type="match status" value="1"/>
</dbReference>
<dbReference type="PANTHER" id="PTHR43007">
    <property type="entry name" value="2-PHOSPHO-L-LACTATE TRANSFERASE"/>
    <property type="match status" value="1"/>
</dbReference>
<dbReference type="PANTHER" id="PTHR43007:SF1">
    <property type="entry name" value="2-PHOSPHO-L-LACTATE TRANSFERASE"/>
    <property type="match status" value="1"/>
</dbReference>
<dbReference type="Pfam" id="PF01933">
    <property type="entry name" value="CofD"/>
    <property type="match status" value="1"/>
</dbReference>
<dbReference type="SUPFAM" id="SSF142338">
    <property type="entry name" value="CofD-like"/>
    <property type="match status" value="1"/>
</dbReference>
<feature type="chain" id="PRO_1000165110" description="Phosphoenolpyruvate transferase">
    <location>
        <begin position="1"/>
        <end position="331"/>
    </location>
</feature>
<feature type="binding site" evidence="1">
    <location>
        <position position="63"/>
    </location>
    <ligand>
        <name>7,8-didemethyl-8-hydroxy-5-deazariboflavin</name>
        <dbReference type="ChEBI" id="CHEBI:59904"/>
    </ligand>
</feature>